<protein>
    <recommendedName>
        <fullName evidence="1">DNA primase DnaG</fullName>
        <ecNumber evidence="1">2.7.7.101</ecNumber>
    </recommendedName>
</protein>
<evidence type="ECO:0000255" key="1">
    <source>
        <dbReference type="HAMAP-Rule" id="MF_00007"/>
    </source>
</evidence>
<evidence type="ECO:0000256" key="2">
    <source>
        <dbReference type="SAM" id="MobiDB-lite"/>
    </source>
</evidence>
<proteinExistence type="inferred from homology"/>
<reference key="1">
    <citation type="submission" date="2007-02" db="EMBL/GenBank/DDBJ databases">
        <title>Complete sequence of Pyrobaculum calidifontis JCM 11548.</title>
        <authorList>
            <consortium name="US DOE Joint Genome Institute"/>
            <person name="Copeland A."/>
            <person name="Lucas S."/>
            <person name="Lapidus A."/>
            <person name="Barry K."/>
            <person name="Glavina del Rio T."/>
            <person name="Dalin E."/>
            <person name="Tice H."/>
            <person name="Pitluck S."/>
            <person name="Chain P."/>
            <person name="Malfatti S."/>
            <person name="Shin M."/>
            <person name="Vergez L."/>
            <person name="Schmutz J."/>
            <person name="Larimer F."/>
            <person name="Land M."/>
            <person name="Hauser L."/>
            <person name="Kyrpides N."/>
            <person name="Mikhailova N."/>
            <person name="Cozen A.E."/>
            <person name="Fitz-Gibbon S.T."/>
            <person name="House C.H."/>
            <person name="Saltikov C."/>
            <person name="Lowe T.M."/>
            <person name="Richardson P."/>
        </authorList>
    </citation>
    <scope>NUCLEOTIDE SEQUENCE [LARGE SCALE GENOMIC DNA]</scope>
    <source>
        <strain>DSM 21063 / JCM 11548 / VA1</strain>
    </source>
</reference>
<sequence>MGALTIVAKYMIVAQIEVNGGVDKSDIIGALFSQTEGLLGKDMDLRELQMMGRIGRIEVDIQEKDGKTKAKIYIPSNLDRYETALVAALIESIERVGPYPATVKVLEIRDLREEKRKKIVERAKELIKMIEEEILPDTKEIIEKLKEDVAKAEVVEYGPEKLPAGPDVDKSDWIIVVEGRADVVNLVKHGYRNVIALEGISRGVPQTIIDLSKRKSITLFIDGDKGGEMVLKELMKVAHIDYVARAPPGKEVEQLTAKEIAKALRNKVTLEEWLAQQKAGAEKTEAAAPPPQQPTAPPAAPSQQPIAEVPQEIVKRLGDMQGTLEAELYDTNWSLIKRIAVRELPDELANSTDSIYAILMDGIVTQRIVDLAAKKGVKIIITARVGPLTKVPEDLKIVTFEQLQKLA</sequence>
<comment type="function">
    <text evidence="1">RNA polymerase that catalyzes the synthesis of short RNA molecules used as primers for DNA polymerase during DNA replication. Also part of the exosome, which is a complex involved in RNA degradation. Acts as a poly(A)-binding protein that enhances the interaction between heteromeric, adenine-rich transcripts and the exosome.</text>
</comment>
<comment type="catalytic activity">
    <reaction evidence="1">
        <text>ssDNA + n NTP = ssDNA/pppN(pN)n-1 hybrid + (n-1) diphosphate.</text>
        <dbReference type="EC" id="2.7.7.101"/>
    </reaction>
</comment>
<comment type="cofactor">
    <cofactor evidence="1">
        <name>Mg(2+)</name>
        <dbReference type="ChEBI" id="CHEBI:18420"/>
    </cofactor>
    <text evidence="1">Binds two Mg(2+) per subunit.</text>
</comment>
<comment type="subunit">
    <text evidence="1">Forms a ternary complex with MCM helicase and DNA. Component of the archaeal exosome complex.</text>
</comment>
<comment type="similarity">
    <text evidence="1">Belongs to the archaeal DnaG primase family.</text>
</comment>
<feature type="chain" id="PRO_1000000565" description="DNA primase DnaG">
    <location>
        <begin position="1"/>
        <end position="407"/>
    </location>
</feature>
<feature type="domain" description="Toprim" evidence="1">
    <location>
        <begin position="172"/>
        <end position="248"/>
    </location>
</feature>
<feature type="region of interest" description="Disordered" evidence="2">
    <location>
        <begin position="279"/>
        <end position="304"/>
    </location>
</feature>
<feature type="compositionally biased region" description="Pro residues" evidence="2">
    <location>
        <begin position="288"/>
        <end position="300"/>
    </location>
</feature>
<feature type="binding site" evidence="1">
    <location>
        <position position="178"/>
    </location>
    <ligand>
        <name>Mg(2+)</name>
        <dbReference type="ChEBI" id="CHEBI:18420"/>
        <label>1</label>
        <note>catalytic</note>
    </ligand>
</feature>
<feature type="binding site" evidence="1">
    <location>
        <position position="222"/>
    </location>
    <ligand>
        <name>Mg(2+)</name>
        <dbReference type="ChEBI" id="CHEBI:18420"/>
        <label>1</label>
        <note>catalytic</note>
    </ligand>
</feature>
<feature type="binding site" evidence="1">
    <location>
        <position position="222"/>
    </location>
    <ligand>
        <name>Mg(2+)</name>
        <dbReference type="ChEBI" id="CHEBI:18420"/>
        <label>2</label>
    </ligand>
</feature>
<feature type="binding site" evidence="1">
    <location>
        <position position="224"/>
    </location>
    <ligand>
        <name>Mg(2+)</name>
        <dbReference type="ChEBI" id="CHEBI:18420"/>
        <label>2</label>
    </ligand>
</feature>
<dbReference type="EC" id="2.7.7.101" evidence="1"/>
<dbReference type="EMBL" id="CP000561">
    <property type="protein sequence ID" value="ABO08475.1"/>
    <property type="molecule type" value="Genomic_DNA"/>
</dbReference>
<dbReference type="RefSeq" id="WP_011849733.1">
    <property type="nucleotide sequence ID" value="NC_009073.1"/>
</dbReference>
<dbReference type="SMR" id="A3MV08"/>
<dbReference type="STRING" id="410359.Pcal_1050"/>
<dbReference type="GeneID" id="4909284"/>
<dbReference type="KEGG" id="pcl:Pcal_1050"/>
<dbReference type="eggNOG" id="arCOG04281">
    <property type="taxonomic scope" value="Archaea"/>
</dbReference>
<dbReference type="HOGENOM" id="CLU_034626_0_0_2"/>
<dbReference type="OrthoDB" id="8643at2157"/>
<dbReference type="Proteomes" id="UP000001431">
    <property type="component" value="Chromosome"/>
</dbReference>
<dbReference type="GO" id="GO:0005737">
    <property type="term" value="C:cytoplasm"/>
    <property type="evidence" value="ECO:0007669"/>
    <property type="project" value="TreeGrafter"/>
</dbReference>
<dbReference type="GO" id="GO:0000428">
    <property type="term" value="C:DNA-directed RNA polymerase complex"/>
    <property type="evidence" value="ECO:0007669"/>
    <property type="project" value="UniProtKB-KW"/>
</dbReference>
<dbReference type="GO" id="GO:0000178">
    <property type="term" value="C:exosome (RNase complex)"/>
    <property type="evidence" value="ECO:0007669"/>
    <property type="project" value="UniProtKB-KW"/>
</dbReference>
<dbReference type="GO" id="GO:1990077">
    <property type="term" value="C:primosome complex"/>
    <property type="evidence" value="ECO:0007669"/>
    <property type="project" value="UniProtKB-KW"/>
</dbReference>
<dbReference type="GO" id="GO:0003899">
    <property type="term" value="F:DNA-directed RNA polymerase activity"/>
    <property type="evidence" value="ECO:0007669"/>
    <property type="project" value="InterPro"/>
</dbReference>
<dbReference type="GO" id="GO:0046872">
    <property type="term" value="F:metal ion binding"/>
    <property type="evidence" value="ECO:0007669"/>
    <property type="project" value="UniProtKB-KW"/>
</dbReference>
<dbReference type="GO" id="GO:0008143">
    <property type="term" value="F:poly(A) binding"/>
    <property type="evidence" value="ECO:0007669"/>
    <property type="project" value="InterPro"/>
</dbReference>
<dbReference type="GO" id="GO:0006269">
    <property type="term" value="P:DNA replication, synthesis of primer"/>
    <property type="evidence" value="ECO:0007669"/>
    <property type="project" value="UniProtKB-UniRule"/>
</dbReference>
<dbReference type="CDD" id="cd01029">
    <property type="entry name" value="TOPRIM_primases"/>
    <property type="match status" value="1"/>
</dbReference>
<dbReference type="FunFam" id="3.40.1360.10:FF:000010">
    <property type="entry name" value="DNA primase DnaG"/>
    <property type="match status" value="1"/>
</dbReference>
<dbReference type="Gene3D" id="3.40.1360.10">
    <property type="match status" value="1"/>
</dbReference>
<dbReference type="HAMAP" id="MF_00007">
    <property type="entry name" value="DNA_primase_DnaG_arc"/>
    <property type="match status" value="1"/>
</dbReference>
<dbReference type="InterPro" id="IPR050219">
    <property type="entry name" value="DnaG_primase"/>
</dbReference>
<dbReference type="InterPro" id="IPR020607">
    <property type="entry name" value="Primase_DnaG_arc"/>
</dbReference>
<dbReference type="InterPro" id="IPR034154">
    <property type="entry name" value="TOPRIM_DnaG/twinkle"/>
</dbReference>
<dbReference type="InterPro" id="IPR006171">
    <property type="entry name" value="TOPRIM_dom"/>
</dbReference>
<dbReference type="NCBIfam" id="NF003108">
    <property type="entry name" value="PRK04031.1-1"/>
    <property type="match status" value="1"/>
</dbReference>
<dbReference type="PANTHER" id="PTHR30313">
    <property type="entry name" value="DNA PRIMASE"/>
    <property type="match status" value="1"/>
</dbReference>
<dbReference type="PANTHER" id="PTHR30313:SF2">
    <property type="entry name" value="DNA PRIMASE"/>
    <property type="match status" value="1"/>
</dbReference>
<dbReference type="Pfam" id="PF13662">
    <property type="entry name" value="Toprim_4"/>
    <property type="match status" value="1"/>
</dbReference>
<dbReference type="SMART" id="SM00493">
    <property type="entry name" value="TOPRIM"/>
    <property type="match status" value="1"/>
</dbReference>
<dbReference type="SUPFAM" id="SSF56731">
    <property type="entry name" value="DNA primase core"/>
    <property type="match status" value="1"/>
</dbReference>
<dbReference type="PROSITE" id="PS50880">
    <property type="entry name" value="TOPRIM"/>
    <property type="match status" value="1"/>
</dbReference>
<gene>
    <name evidence="1" type="primary">dnaG</name>
    <name type="ordered locus">Pcal_1050</name>
</gene>
<name>DNAG_PYRCJ</name>
<keyword id="KW-0235">DNA replication</keyword>
<keyword id="KW-0240">DNA-directed RNA polymerase</keyword>
<keyword id="KW-0271">Exosome</keyword>
<keyword id="KW-0460">Magnesium</keyword>
<keyword id="KW-0479">Metal-binding</keyword>
<keyword id="KW-0548">Nucleotidyltransferase</keyword>
<keyword id="KW-0639">Primosome</keyword>
<keyword id="KW-0804">Transcription</keyword>
<keyword id="KW-0808">Transferase</keyword>
<organism>
    <name type="scientific">Pyrobaculum calidifontis (strain DSM 21063 / JCM 11548 / VA1)</name>
    <dbReference type="NCBI Taxonomy" id="410359"/>
    <lineage>
        <taxon>Archaea</taxon>
        <taxon>Thermoproteota</taxon>
        <taxon>Thermoprotei</taxon>
        <taxon>Thermoproteales</taxon>
        <taxon>Thermoproteaceae</taxon>
        <taxon>Pyrobaculum</taxon>
    </lineage>
</organism>
<accession>A3MV08</accession>